<keyword id="KW-0025">Alternative splicing</keyword>
<keyword id="KW-0175">Coiled coil</keyword>
<keyword id="KW-0963">Cytoplasm</keyword>
<keyword id="KW-0206">Cytoskeleton</keyword>
<keyword id="KW-0597">Phosphoprotein</keyword>
<keyword id="KW-1267">Proteomics identification</keyword>
<keyword id="KW-1185">Reference proteome</keyword>
<organism>
    <name type="scientific">Homo sapiens</name>
    <name type="common">Human</name>
    <dbReference type="NCBI Taxonomy" id="9606"/>
    <lineage>
        <taxon>Eukaryota</taxon>
        <taxon>Metazoa</taxon>
        <taxon>Chordata</taxon>
        <taxon>Craniata</taxon>
        <taxon>Vertebrata</taxon>
        <taxon>Euteleostomi</taxon>
        <taxon>Mammalia</taxon>
        <taxon>Eutheria</taxon>
        <taxon>Euarchontoglires</taxon>
        <taxon>Primates</taxon>
        <taxon>Haplorrhini</taxon>
        <taxon>Catarrhini</taxon>
        <taxon>Hominidae</taxon>
        <taxon>Homo</taxon>
    </lineage>
</organism>
<dbReference type="EMBL" id="AK024324">
    <property type="protein sequence ID" value="BAB14884.1"/>
    <property type="molecule type" value="mRNA"/>
</dbReference>
<dbReference type="EMBL" id="AK294321">
    <property type="protein sequence ID" value="BAG57595.1"/>
    <property type="molecule type" value="mRNA"/>
</dbReference>
<dbReference type="EMBL" id="AK298966">
    <property type="protein sequence ID" value="BAG61061.1"/>
    <property type="molecule type" value="mRNA"/>
</dbReference>
<dbReference type="EMBL" id="DC366088">
    <property type="status" value="NOT_ANNOTATED_CDS"/>
    <property type="molecule type" value="mRNA"/>
</dbReference>
<dbReference type="EMBL" id="AC074321">
    <property type="status" value="NOT_ANNOTATED_CDS"/>
    <property type="molecule type" value="Genomic_DNA"/>
</dbReference>
<dbReference type="EMBL" id="AL356115">
    <property type="status" value="NOT_ANNOTATED_CDS"/>
    <property type="molecule type" value="Genomic_DNA"/>
</dbReference>
<dbReference type="EMBL" id="CH471142">
    <property type="protein sequence ID" value="EAW80350.1"/>
    <property type="molecule type" value="Genomic_DNA"/>
</dbReference>
<dbReference type="EMBL" id="CH471142">
    <property type="protein sequence ID" value="EAW80352.1"/>
    <property type="molecule type" value="Genomic_DNA"/>
</dbReference>
<dbReference type="EMBL" id="BC030528">
    <property type="protein sequence ID" value="AAH30528.1"/>
    <property type="status" value="ALT_INIT"/>
    <property type="molecule type" value="mRNA"/>
</dbReference>
<dbReference type="EMBL" id="AF241785">
    <property type="protein sequence ID" value="AAG44473.1"/>
    <property type="status" value="ALT_FRAME"/>
    <property type="molecule type" value="mRNA"/>
</dbReference>
<dbReference type="EMBL" id="AB032954">
    <property type="protein sequence ID" value="BAA86442.1"/>
    <property type="molecule type" value="mRNA"/>
</dbReference>
<dbReference type="CCDS" id="CCDS31235.1">
    <molecule id="Q9H7U1-1"/>
</dbReference>
<dbReference type="CCDS" id="CCDS60582.1">
    <molecule id="Q9H7U1-3"/>
</dbReference>
<dbReference type="CCDS" id="CCDS60583.1">
    <molecule id="Q9H7U1-4"/>
</dbReference>
<dbReference type="CCDS" id="CCDS73159.1">
    <molecule id="Q9H7U1-2"/>
</dbReference>
<dbReference type="RefSeq" id="NP_001271169.1">
    <molecule id="Q9H7U1-3"/>
    <property type="nucleotide sequence ID" value="NM_001284240.2"/>
</dbReference>
<dbReference type="RefSeq" id="NP_001271170.1">
    <molecule id="Q9H7U1-2"/>
    <property type="nucleotide sequence ID" value="NM_001284241.2"/>
</dbReference>
<dbReference type="RefSeq" id="NP_001271171.1">
    <property type="nucleotide sequence ID" value="NM_001284242.1"/>
</dbReference>
<dbReference type="RefSeq" id="NP_001271172.1">
    <molecule id="Q9H7U1-4"/>
    <property type="nucleotide sequence ID" value="NM_001284243.2"/>
</dbReference>
<dbReference type="RefSeq" id="NP_061872.2">
    <molecule id="Q9H7U1-1"/>
    <property type="nucleotide sequence ID" value="NM_018999.4"/>
</dbReference>
<dbReference type="RefSeq" id="XP_016871829.1">
    <molecule id="Q9H7U1-3"/>
    <property type="nucleotide sequence ID" value="XM_017016340.3"/>
</dbReference>
<dbReference type="RefSeq" id="XP_047281321.1">
    <molecule id="Q9H7U1-3"/>
    <property type="nucleotide sequence ID" value="XM_047425365.1"/>
</dbReference>
<dbReference type="RefSeq" id="XP_054222093.1">
    <molecule id="Q9H7U1-3"/>
    <property type="nucleotide sequence ID" value="XM_054366118.1"/>
</dbReference>
<dbReference type="RefSeq" id="XP_054222094.1">
    <molecule id="Q9H7U1-3"/>
    <property type="nucleotide sequence ID" value="XM_054366119.1"/>
</dbReference>
<dbReference type="SMR" id="Q9H7U1"/>
<dbReference type="BioGRID" id="119968">
    <property type="interactions" value="75"/>
</dbReference>
<dbReference type="FunCoup" id="Q9H7U1">
    <property type="interactions" value="552"/>
</dbReference>
<dbReference type="IntAct" id="Q9H7U1">
    <property type="interactions" value="38"/>
</dbReference>
<dbReference type="MINT" id="Q9H7U1"/>
<dbReference type="STRING" id="9606.ENSP00000361160"/>
<dbReference type="GlyCosmos" id="Q9H7U1">
    <property type="glycosylation" value="1 site, 1 glycan"/>
</dbReference>
<dbReference type="GlyGen" id="Q9H7U1">
    <property type="glycosylation" value="2 sites, 1 O-linked glycan (2 sites)"/>
</dbReference>
<dbReference type="iPTMnet" id="Q9H7U1"/>
<dbReference type="PhosphoSitePlus" id="Q9H7U1"/>
<dbReference type="BioMuta" id="CCSER2"/>
<dbReference type="DMDM" id="160386966"/>
<dbReference type="jPOST" id="Q9H7U1"/>
<dbReference type="MassIVE" id="Q9H7U1"/>
<dbReference type="PaxDb" id="9606-ENSP00000361160"/>
<dbReference type="PeptideAtlas" id="Q9H7U1"/>
<dbReference type="ProteomicsDB" id="4088"/>
<dbReference type="ProteomicsDB" id="81148">
    <molecule id="Q9H7U1-1"/>
</dbReference>
<dbReference type="ProteomicsDB" id="81149">
    <molecule id="Q9H7U1-2"/>
</dbReference>
<dbReference type="ProteomicsDB" id="81150">
    <molecule id="Q9H7U1-3"/>
</dbReference>
<dbReference type="Antibodypedia" id="48922">
    <property type="antibodies" value="30 antibodies from 9 providers"/>
</dbReference>
<dbReference type="DNASU" id="54462"/>
<dbReference type="Ensembl" id="ENST00000224756.12">
    <molecule id="Q9H7U1-1"/>
    <property type="protein sequence ID" value="ENSP00000224756.8"/>
    <property type="gene ID" value="ENSG00000107771.17"/>
</dbReference>
<dbReference type="Ensembl" id="ENST00000359979.8">
    <molecule id="Q9H7U1-2"/>
    <property type="protein sequence ID" value="ENSP00000353068.4"/>
    <property type="gene ID" value="ENSG00000107771.17"/>
</dbReference>
<dbReference type="Ensembl" id="ENST00000372088.8">
    <molecule id="Q9H7U1-3"/>
    <property type="protein sequence ID" value="ENSP00000361160.2"/>
    <property type="gene ID" value="ENSG00000107771.17"/>
</dbReference>
<dbReference type="Ensembl" id="ENST00000543283.2">
    <molecule id="Q9H7U1-4"/>
    <property type="protein sequence ID" value="ENSP00000439944.1"/>
    <property type="gene ID" value="ENSG00000107771.17"/>
</dbReference>
<dbReference type="GeneID" id="54462"/>
<dbReference type="KEGG" id="hsa:54462"/>
<dbReference type="MANE-Select" id="ENST00000372088.8">
    <molecule id="Q9H7U1-3"/>
    <property type="protein sequence ID" value="ENSP00000361160.2"/>
    <property type="RefSeq nucleotide sequence ID" value="NM_001284240.2"/>
    <property type="RefSeq protein sequence ID" value="NP_001271169.1"/>
</dbReference>
<dbReference type="UCSC" id="uc001kdg.3">
    <molecule id="Q9H7U1-1"/>
    <property type="organism name" value="human"/>
</dbReference>
<dbReference type="AGR" id="HGNC:29197"/>
<dbReference type="CTD" id="54462"/>
<dbReference type="GeneCards" id="CCSER2"/>
<dbReference type="HGNC" id="HGNC:29197">
    <property type="gene designation" value="CCSER2"/>
</dbReference>
<dbReference type="HPA" id="ENSG00000107771">
    <property type="expression patterns" value="Low tissue specificity"/>
</dbReference>
<dbReference type="MIM" id="619944">
    <property type="type" value="gene"/>
</dbReference>
<dbReference type="neXtProt" id="NX_Q9H7U1"/>
<dbReference type="OpenTargets" id="ENSG00000107771"/>
<dbReference type="PharmGKB" id="PA165548597"/>
<dbReference type="VEuPathDB" id="HostDB:ENSG00000107771"/>
<dbReference type="eggNOG" id="ENOG502QV4S">
    <property type="taxonomic scope" value="Eukaryota"/>
</dbReference>
<dbReference type="GeneTree" id="ENSGT00940000153912"/>
<dbReference type="HOGENOM" id="CLU_499291_0_0_1"/>
<dbReference type="InParanoid" id="Q9H7U1"/>
<dbReference type="OMA" id="NECTKHT"/>
<dbReference type="OrthoDB" id="9948757at2759"/>
<dbReference type="PAN-GO" id="Q9H7U1">
    <property type="GO annotations" value="3 GO annotations based on evolutionary models"/>
</dbReference>
<dbReference type="PhylomeDB" id="Q9H7U1"/>
<dbReference type="TreeFam" id="TF331021"/>
<dbReference type="PathwayCommons" id="Q9H7U1"/>
<dbReference type="SignaLink" id="Q9H7U1"/>
<dbReference type="BioGRID-ORCS" id="54462">
    <property type="hits" value="19 hits in 1151 CRISPR screens"/>
</dbReference>
<dbReference type="ChiTaRS" id="CCSER2">
    <property type="organism name" value="human"/>
</dbReference>
<dbReference type="GenomeRNAi" id="54462"/>
<dbReference type="Pharos" id="Q9H7U1">
    <property type="development level" value="Tdark"/>
</dbReference>
<dbReference type="PRO" id="PR:Q9H7U1"/>
<dbReference type="Proteomes" id="UP000005640">
    <property type="component" value="Chromosome 10"/>
</dbReference>
<dbReference type="RNAct" id="Q9H7U1">
    <property type="molecule type" value="protein"/>
</dbReference>
<dbReference type="Bgee" id="ENSG00000107771">
    <property type="expression patterns" value="Expressed in sperm and 207 other cell types or tissues"/>
</dbReference>
<dbReference type="ExpressionAtlas" id="Q9H7U1">
    <property type="expression patterns" value="baseline and differential"/>
</dbReference>
<dbReference type="GO" id="GO:0005737">
    <property type="term" value="C:cytoplasm"/>
    <property type="evidence" value="ECO:0007669"/>
    <property type="project" value="UniProtKB-KW"/>
</dbReference>
<dbReference type="GO" id="GO:0015630">
    <property type="term" value="C:microtubule cytoskeleton"/>
    <property type="evidence" value="ECO:0000318"/>
    <property type="project" value="GO_Central"/>
</dbReference>
<dbReference type="GO" id="GO:0008017">
    <property type="term" value="F:microtubule binding"/>
    <property type="evidence" value="ECO:0000318"/>
    <property type="project" value="GO_Central"/>
</dbReference>
<dbReference type="GO" id="GO:0001578">
    <property type="term" value="P:microtubule bundle formation"/>
    <property type="evidence" value="ECO:0000318"/>
    <property type="project" value="GO_Central"/>
</dbReference>
<dbReference type="InterPro" id="IPR029627">
    <property type="entry name" value="CCSER"/>
</dbReference>
<dbReference type="PANTHER" id="PTHR22461:SF2">
    <property type="entry name" value="SERINE-RICH COILED-COIL DOMAIN-CONTAINING PROTEIN 2"/>
    <property type="match status" value="1"/>
</dbReference>
<dbReference type="PANTHER" id="PTHR22461">
    <property type="entry name" value="SERINE-RICH COILED-COIL DOMAIN-CONTAINING PROTEIN 2-RELATED"/>
    <property type="match status" value="1"/>
</dbReference>
<reference key="1">
    <citation type="journal article" date="2004" name="Nat. Genet.">
        <title>Complete sequencing and characterization of 21,243 full-length human cDNAs.</title>
        <authorList>
            <person name="Ota T."/>
            <person name="Suzuki Y."/>
            <person name="Nishikawa T."/>
            <person name="Otsuki T."/>
            <person name="Sugiyama T."/>
            <person name="Irie R."/>
            <person name="Wakamatsu A."/>
            <person name="Hayashi K."/>
            <person name="Sato H."/>
            <person name="Nagai K."/>
            <person name="Kimura K."/>
            <person name="Makita H."/>
            <person name="Sekine M."/>
            <person name="Obayashi M."/>
            <person name="Nishi T."/>
            <person name="Shibahara T."/>
            <person name="Tanaka T."/>
            <person name="Ishii S."/>
            <person name="Yamamoto J."/>
            <person name="Saito K."/>
            <person name="Kawai Y."/>
            <person name="Isono Y."/>
            <person name="Nakamura Y."/>
            <person name="Nagahari K."/>
            <person name="Murakami K."/>
            <person name="Yasuda T."/>
            <person name="Iwayanagi T."/>
            <person name="Wagatsuma M."/>
            <person name="Shiratori A."/>
            <person name="Sudo H."/>
            <person name="Hosoiri T."/>
            <person name="Kaku Y."/>
            <person name="Kodaira H."/>
            <person name="Kondo H."/>
            <person name="Sugawara M."/>
            <person name="Takahashi M."/>
            <person name="Kanda K."/>
            <person name="Yokoi T."/>
            <person name="Furuya T."/>
            <person name="Kikkawa E."/>
            <person name="Omura Y."/>
            <person name="Abe K."/>
            <person name="Kamihara K."/>
            <person name="Katsuta N."/>
            <person name="Sato K."/>
            <person name="Tanikawa M."/>
            <person name="Yamazaki M."/>
            <person name="Ninomiya K."/>
            <person name="Ishibashi T."/>
            <person name="Yamashita H."/>
            <person name="Murakawa K."/>
            <person name="Fujimori K."/>
            <person name="Tanai H."/>
            <person name="Kimata M."/>
            <person name="Watanabe M."/>
            <person name="Hiraoka S."/>
            <person name="Chiba Y."/>
            <person name="Ishida S."/>
            <person name="Ono Y."/>
            <person name="Takiguchi S."/>
            <person name="Watanabe S."/>
            <person name="Yosida M."/>
            <person name="Hotuta T."/>
            <person name="Kusano J."/>
            <person name="Kanehori K."/>
            <person name="Takahashi-Fujii A."/>
            <person name="Hara H."/>
            <person name="Tanase T.-O."/>
            <person name="Nomura Y."/>
            <person name="Togiya S."/>
            <person name="Komai F."/>
            <person name="Hara R."/>
            <person name="Takeuchi K."/>
            <person name="Arita M."/>
            <person name="Imose N."/>
            <person name="Musashino K."/>
            <person name="Yuuki H."/>
            <person name="Oshima A."/>
            <person name="Sasaki N."/>
            <person name="Aotsuka S."/>
            <person name="Yoshikawa Y."/>
            <person name="Matsunawa H."/>
            <person name="Ichihara T."/>
            <person name="Shiohata N."/>
            <person name="Sano S."/>
            <person name="Moriya S."/>
            <person name="Momiyama H."/>
            <person name="Satoh N."/>
            <person name="Takami S."/>
            <person name="Terashima Y."/>
            <person name="Suzuki O."/>
            <person name="Nakagawa S."/>
            <person name="Senoh A."/>
            <person name="Mizoguchi H."/>
            <person name="Goto Y."/>
            <person name="Shimizu F."/>
            <person name="Wakebe H."/>
            <person name="Hishigaki H."/>
            <person name="Watanabe T."/>
            <person name="Sugiyama A."/>
            <person name="Takemoto M."/>
            <person name="Kawakami B."/>
            <person name="Yamazaki M."/>
            <person name="Watanabe K."/>
            <person name="Kumagai A."/>
            <person name="Itakura S."/>
            <person name="Fukuzumi Y."/>
            <person name="Fujimori Y."/>
            <person name="Komiyama M."/>
            <person name="Tashiro H."/>
            <person name="Tanigami A."/>
            <person name="Fujiwara T."/>
            <person name="Ono T."/>
            <person name="Yamada K."/>
            <person name="Fujii Y."/>
            <person name="Ozaki K."/>
            <person name="Hirao M."/>
            <person name="Ohmori Y."/>
            <person name="Kawabata A."/>
            <person name="Hikiji T."/>
            <person name="Kobatake N."/>
            <person name="Inagaki H."/>
            <person name="Ikema Y."/>
            <person name="Okamoto S."/>
            <person name="Okitani R."/>
            <person name="Kawakami T."/>
            <person name="Noguchi S."/>
            <person name="Itoh T."/>
            <person name="Shigeta K."/>
            <person name="Senba T."/>
            <person name="Matsumura K."/>
            <person name="Nakajima Y."/>
            <person name="Mizuno T."/>
            <person name="Morinaga M."/>
            <person name="Sasaki M."/>
            <person name="Togashi T."/>
            <person name="Oyama M."/>
            <person name="Hata H."/>
            <person name="Watanabe M."/>
            <person name="Komatsu T."/>
            <person name="Mizushima-Sugano J."/>
            <person name="Satoh T."/>
            <person name="Shirai Y."/>
            <person name="Takahashi Y."/>
            <person name="Nakagawa K."/>
            <person name="Okumura K."/>
            <person name="Nagase T."/>
            <person name="Nomura N."/>
            <person name="Kikuchi H."/>
            <person name="Masuho Y."/>
            <person name="Yamashita R."/>
            <person name="Nakai K."/>
            <person name="Yada T."/>
            <person name="Nakamura Y."/>
            <person name="Ohara O."/>
            <person name="Isogai T."/>
            <person name="Sugano S."/>
        </authorList>
    </citation>
    <scope>NUCLEOTIDE SEQUENCE [LARGE SCALE MRNA] (ISOFORMS 3 AND 4)</scope>
    <scope>NUCLEOTIDE SEQUENCE [LARGE SCALE MRNA] OF 1-110 (ISOFORMS 1/2)</scope>
    <scope>NUCLEOTIDE SEQUENCE [LARGE SCALE MRNA] OF 8-730 (ISOFORM 1)</scope>
    <source>
        <tissue>Amygdala</tissue>
        <tissue>Placenta</tissue>
        <tissue>Teratocarcinoma</tissue>
    </source>
</reference>
<reference key="2">
    <citation type="journal article" date="2004" name="Nature">
        <title>The DNA sequence and comparative analysis of human chromosome 10.</title>
        <authorList>
            <person name="Deloukas P."/>
            <person name="Earthrowl M.E."/>
            <person name="Grafham D.V."/>
            <person name="Rubenfield M."/>
            <person name="French L."/>
            <person name="Steward C.A."/>
            <person name="Sims S.K."/>
            <person name="Jones M.C."/>
            <person name="Searle S."/>
            <person name="Scott C."/>
            <person name="Howe K."/>
            <person name="Hunt S.E."/>
            <person name="Andrews T.D."/>
            <person name="Gilbert J.G.R."/>
            <person name="Swarbreck D."/>
            <person name="Ashurst J.L."/>
            <person name="Taylor A."/>
            <person name="Battles J."/>
            <person name="Bird C.P."/>
            <person name="Ainscough R."/>
            <person name="Almeida J.P."/>
            <person name="Ashwell R.I.S."/>
            <person name="Ambrose K.D."/>
            <person name="Babbage A.K."/>
            <person name="Bagguley C.L."/>
            <person name="Bailey J."/>
            <person name="Banerjee R."/>
            <person name="Bates K."/>
            <person name="Beasley H."/>
            <person name="Bray-Allen S."/>
            <person name="Brown A.J."/>
            <person name="Brown J.Y."/>
            <person name="Burford D.C."/>
            <person name="Burrill W."/>
            <person name="Burton J."/>
            <person name="Cahill P."/>
            <person name="Camire D."/>
            <person name="Carter N.P."/>
            <person name="Chapman J.C."/>
            <person name="Clark S.Y."/>
            <person name="Clarke G."/>
            <person name="Clee C.M."/>
            <person name="Clegg S."/>
            <person name="Corby N."/>
            <person name="Coulson A."/>
            <person name="Dhami P."/>
            <person name="Dutta I."/>
            <person name="Dunn M."/>
            <person name="Faulkner L."/>
            <person name="Frankish A."/>
            <person name="Frankland J.A."/>
            <person name="Garner P."/>
            <person name="Garnett J."/>
            <person name="Gribble S."/>
            <person name="Griffiths C."/>
            <person name="Grocock R."/>
            <person name="Gustafson E."/>
            <person name="Hammond S."/>
            <person name="Harley J.L."/>
            <person name="Hart E."/>
            <person name="Heath P.D."/>
            <person name="Ho T.P."/>
            <person name="Hopkins B."/>
            <person name="Horne J."/>
            <person name="Howden P.J."/>
            <person name="Huckle E."/>
            <person name="Hynds C."/>
            <person name="Johnson C."/>
            <person name="Johnson D."/>
            <person name="Kana A."/>
            <person name="Kay M."/>
            <person name="Kimberley A.M."/>
            <person name="Kershaw J.K."/>
            <person name="Kokkinaki M."/>
            <person name="Laird G.K."/>
            <person name="Lawlor S."/>
            <person name="Lee H.M."/>
            <person name="Leongamornlert D.A."/>
            <person name="Laird G."/>
            <person name="Lloyd C."/>
            <person name="Lloyd D.M."/>
            <person name="Loveland J."/>
            <person name="Lovell J."/>
            <person name="McLaren S."/>
            <person name="McLay K.E."/>
            <person name="McMurray A."/>
            <person name="Mashreghi-Mohammadi M."/>
            <person name="Matthews L."/>
            <person name="Milne S."/>
            <person name="Nickerson T."/>
            <person name="Nguyen M."/>
            <person name="Overton-Larty E."/>
            <person name="Palmer S.A."/>
            <person name="Pearce A.V."/>
            <person name="Peck A.I."/>
            <person name="Pelan S."/>
            <person name="Phillimore B."/>
            <person name="Porter K."/>
            <person name="Rice C.M."/>
            <person name="Rogosin A."/>
            <person name="Ross M.T."/>
            <person name="Sarafidou T."/>
            <person name="Sehra H.K."/>
            <person name="Shownkeen R."/>
            <person name="Skuce C.D."/>
            <person name="Smith M."/>
            <person name="Standring L."/>
            <person name="Sycamore N."/>
            <person name="Tester J."/>
            <person name="Thorpe A."/>
            <person name="Torcasso W."/>
            <person name="Tracey A."/>
            <person name="Tromans A."/>
            <person name="Tsolas J."/>
            <person name="Wall M."/>
            <person name="Walsh J."/>
            <person name="Wang H."/>
            <person name="Weinstock K."/>
            <person name="West A.P."/>
            <person name="Willey D.L."/>
            <person name="Whitehead S.L."/>
            <person name="Wilming L."/>
            <person name="Wray P.W."/>
            <person name="Young L."/>
            <person name="Chen Y."/>
            <person name="Lovering R.C."/>
            <person name="Moschonas N.K."/>
            <person name="Siebert R."/>
            <person name="Fechtel K."/>
            <person name="Bentley D."/>
            <person name="Durbin R.M."/>
            <person name="Hubbard T."/>
            <person name="Doucette-Stamm L."/>
            <person name="Beck S."/>
            <person name="Smith D.R."/>
            <person name="Rogers J."/>
        </authorList>
    </citation>
    <scope>NUCLEOTIDE SEQUENCE [LARGE SCALE GENOMIC DNA]</scope>
</reference>
<reference key="3">
    <citation type="submission" date="2005-09" db="EMBL/GenBank/DDBJ databases">
        <authorList>
            <person name="Mural R.J."/>
            <person name="Istrail S."/>
            <person name="Sutton G.G."/>
            <person name="Florea L."/>
            <person name="Halpern A.L."/>
            <person name="Mobarry C.M."/>
            <person name="Lippert R."/>
            <person name="Walenz B."/>
            <person name="Shatkay H."/>
            <person name="Dew I."/>
            <person name="Miller J.R."/>
            <person name="Flanigan M.J."/>
            <person name="Edwards N.J."/>
            <person name="Bolanos R."/>
            <person name="Fasulo D."/>
            <person name="Halldorsson B.V."/>
            <person name="Hannenhalli S."/>
            <person name="Turner R."/>
            <person name="Yooseph S."/>
            <person name="Lu F."/>
            <person name="Nusskern D.R."/>
            <person name="Shue B.C."/>
            <person name="Zheng X.H."/>
            <person name="Zhong F."/>
            <person name="Delcher A.L."/>
            <person name="Huson D.H."/>
            <person name="Kravitz S.A."/>
            <person name="Mouchard L."/>
            <person name="Reinert K."/>
            <person name="Remington K.A."/>
            <person name="Clark A.G."/>
            <person name="Waterman M.S."/>
            <person name="Eichler E.E."/>
            <person name="Adams M.D."/>
            <person name="Hunkapiller M.W."/>
            <person name="Myers E.W."/>
            <person name="Venter J.C."/>
        </authorList>
    </citation>
    <scope>NUCLEOTIDE SEQUENCE [LARGE SCALE GENOMIC DNA]</scope>
</reference>
<reference key="4">
    <citation type="journal article" date="2004" name="Genome Res.">
        <title>The status, quality, and expansion of the NIH full-length cDNA project: the Mammalian Gene Collection (MGC).</title>
        <authorList>
            <consortium name="The MGC Project Team"/>
        </authorList>
    </citation>
    <scope>NUCLEOTIDE SEQUENCE [LARGE SCALE MRNA] (ISOFORM 2)</scope>
    <source>
        <tissue>Lung</tissue>
    </source>
</reference>
<reference key="5">
    <citation type="submission" date="2000-03" db="EMBL/GenBank/DDBJ databases">
        <authorList>
            <person name="Cheng Z."/>
            <person name="Gao G."/>
            <person name="Peng Y."/>
            <person name="Ren S."/>
            <person name="Chen Z."/>
            <person name="Han Z."/>
        </authorList>
    </citation>
    <scope>NUCLEOTIDE SEQUENCE [LARGE SCALE MRNA] OF 85-834 (ISOFORM 1)</scope>
    <source>
        <tissue>Pituitary</tissue>
    </source>
</reference>
<reference key="6">
    <citation type="journal article" date="1999" name="DNA Res.">
        <title>Characterization of cDNA clones selected by the GeneMark analysis from size-fractionated cDNA libraries from human brain.</title>
        <authorList>
            <person name="Hirosawa M."/>
            <person name="Nagase T."/>
            <person name="Ishikawa K."/>
            <person name="Kikuno R."/>
            <person name="Nomura N."/>
            <person name="Ohara O."/>
        </authorList>
    </citation>
    <scope>NUCLEOTIDE SEQUENCE [LARGE SCALE MRNA] OF 247-834 (ISOFORM 1)</scope>
    <source>
        <tissue>Brain</tissue>
    </source>
</reference>
<reference key="7">
    <citation type="journal article" date="2013" name="J. Proteome Res.">
        <title>Toward a comprehensive characterization of a human cancer cell phosphoproteome.</title>
        <authorList>
            <person name="Zhou H."/>
            <person name="Di Palma S."/>
            <person name="Preisinger C."/>
            <person name="Peng M."/>
            <person name="Polat A.N."/>
            <person name="Heck A.J."/>
            <person name="Mohammed S."/>
        </authorList>
    </citation>
    <scope>PHOSPHORYLATION [LARGE SCALE ANALYSIS] AT SER-223</scope>
    <scope>IDENTIFICATION BY MASS SPECTROMETRY [LARGE SCALE ANALYSIS]</scope>
    <source>
        <tissue>Erythroleukemia</tissue>
    </source>
</reference>
<accession>Q9H7U1</accession>
<accession>B4DFY4</accession>
<accession>B4DQU9</accession>
<accession>B7WPE8</accession>
<accession>D3DWE2</accession>
<accession>Q8N6E9</accession>
<accession>Q9H2S0</accession>
<accession>Q9ULU1</accession>
<comment type="function">
    <text evidence="1">Microtubule-binding protein which might play a role in microtubule bundling.</text>
</comment>
<comment type="interaction">
    <interactant intactId="EBI-714702">
        <id>Q9H7U1</id>
    </interactant>
    <interactant intactId="EBI-928842">
        <id>Q9GZM8</id>
        <label>NDEL1</label>
    </interactant>
    <organismsDiffer>false</organismsDiffer>
    <experiments>5</experiments>
</comment>
<comment type="subcellular location">
    <subcellularLocation>
        <location evidence="1">Cytoplasm</location>
        <location evidence="1">Cytoskeleton</location>
    </subcellularLocation>
    <text evidence="1">Associates with microtubules in interphase. Has diffuse expression throughout the cell during mitosis.</text>
</comment>
<comment type="alternative products">
    <event type="alternative splicing"/>
    <isoform>
        <id>Q9H7U1-1</id>
        <name>1</name>
        <sequence type="displayed"/>
    </isoform>
    <isoform>
        <id>Q9H7U1-2</id>
        <name>2</name>
        <sequence type="described" ref="VSP_029180 VSP_029181"/>
    </isoform>
    <isoform>
        <id>Q9H7U1-3</id>
        <name>3</name>
        <sequence type="described" ref="VSP_040287"/>
    </isoform>
    <isoform>
        <id>Q9H7U1-4</id>
        <name>4</name>
        <sequence type="described" ref="VSP_054560"/>
    </isoform>
</comment>
<comment type="similarity">
    <text evidence="6">Belongs to the CCSER family.</text>
</comment>
<comment type="sequence caution" evidence="6">
    <conflict type="frameshift">
        <sequence resource="EMBL-CDS" id="AAG44473"/>
    </conflict>
</comment>
<comment type="sequence caution" evidence="6">
    <conflict type="erroneous initiation">
        <sequence resource="EMBL-CDS" id="AAH30528"/>
    </conflict>
    <text>Truncated N-terminus.</text>
</comment>
<proteinExistence type="evidence at protein level"/>
<evidence type="ECO:0000250" key="1">
    <source>
        <dbReference type="UniProtKB" id="Q3UHI0"/>
    </source>
</evidence>
<evidence type="ECO:0000255" key="2"/>
<evidence type="ECO:0000256" key="3">
    <source>
        <dbReference type="SAM" id="MobiDB-lite"/>
    </source>
</evidence>
<evidence type="ECO:0000303" key="4">
    <source>
    </source>
</evidence>
<evidence type="ECO:0000303" key="5">
    <source>
    </source>
</evidence>
<evidence type="ECO:0000305" key="6"/>
<evidence type="ECO:0007744" key="7">
    <source>
    </source>
</evidence>
<name>CCSE2_HUMAN</name>
<sequence length="834" mass="93548">MEEKTQIKTFLGSKLPKYGTKSVRSTLQPMPNGTPVNLLGTSKNSNVKSYIKNNGSDCPSSHSFNWRKANKYQLCAQGVEEPNNTQNSHDKIIDPEKRVPTQGMFDKNGIKGGLKSVSLFTSKLAKPSTMFVSSTEELNQKSFSGPSNLGKFTKGTLLGRTSYSSINTPKSQLNGFYGNRSAGSMQRPRANSCATRSSSGESLAQSPDSSKSINCEKMVRSQSFSHSIQNSFLPPSSITRSHSFNRAVDLTKPYQNQQLSIRVPLRSSMLTRNSRQPEVLNGNEHLGYGFNRPYAAGGKKLALPNGPGVTSTLGYRMVHPSLLKSSRSPFSGTMTVDGNKNSPADTCVEEDATVLAKDRAANKDQELIENESYRTKNNQTMKHDAKMRYLSDDVDDISLSSLSSSDKNDLSEDFSDDFIDIEDSNRTRITPEEMSLKEEKHENGPPQDMFDSPKENEKAFSKTDEWIDISVSDRSECTKHTSGNNLVSPDTDYRAGSSFELSPSDSSDGTYMWDEEGLEPIGNVHPVGSYESSEMNSIDILNNLESCDLEDDDLMLDVDLPEDAPLENVECDNMNRFDRPDRNVRQPQEGFWKRPPQRWSGQEHYHLSHPDHYHHHGKSDLSRGSPYRESPLGHFESYGGMPFFQAQKMFVDVPENTVILDEMTLRHMVQDCTAVKTQLLKLKRLLHQHDGSGSLHDIQLSLPSSPEPEDGDKVYKNEDLLNEIKQLKDEIKKKDEKIQLLELQLATQHICHQKCKEEKCTYADKYTQTPWRRIPGGYSAPSFSPWQGSFQGIPRTVPPHRRQTSSTTAFQQPSQTHRSHPGKTNKATTYRGPQ</sequence>
<gene>
    <name type="primary">CCSER2</name>
    <name type="synonym">FAM190B</name>
    <name type="synonym">KIAA1128</name>
    <name type="ORF">NPD012</name>
</gene>
<feature type="chain" id="PRO_0000309461" description="Serine-rich coiled-coil domain-containing protein 2">
    <location>
        <begin position="1"/>
        <end position="834"/>
    </location>
</feature>
<feature type="region of interest" description="Disordered" evidence="3">
    <location>
        <begin position="169"/>
        <end position="212"/>
    </location>
</feature>
<feature type="region of interest" description="Disordered" evidence="3">
    <location>
        <begin position="426"/>
        <end position="454"/>
    </location>
</feature>
<feature type="region of interest" description="Disordered" evidence="3">
    <location>
        <begin position="477"/>
        <end position="509"/>
    </location>
</feature>
<feature type="region of interest" description="Disordered" evidence="3">
    <location>
        <begin position="573"/>
        <end position="628"/>
    </location>
</feature>
<feature type="region of interest" description="Disordered" evidence="3">
    <location>
        <begin position="695"/>
        <end position="714"/>
    </location>
</feature>
<feature type="region of interest" description="Disordered" evidence="3">
    <location>
        <begin position="780"/>
        <end position="834"/>
    </location>
</feature>
<feature type="coiled-coil region" evidence="2">
    <location>
        <begin position="712"/>
        <end position="749"/>
    </location>
</feature>
<feature type="compositionally biased region" description="Polar residues" evidence="3">
    <location>
        <begin position="192"/>
        <end position="212"/>
    </location>
</feature>
<feature type="compositionally biased region" description="Basic and acidic residues" evidence="3">
    <location>
        <begin position="426"/>
        <end position="443"/>
    </location>
</feature>
<feature type="compositionally biased region" description="Low complexity" evidence="3">
    <location>
        <begin position="497"/>
        <end position="507"/>
    </location>
</feature>
<feature type="compositionally biased region" description="Basic and acidic residues" evidence="3">
    <location>
        <begin position="573"/>
        <end position="584"/>
    </location>
</feature>
<feature type="compositionally biased region" description="Basic and acidic residues" evidence="3">
    <location>
        <begin position="601"/>
        <end position="611"/>
    </location>
</feature>
<feature type="compositionally biased region" description="Polar residues" evidence="3">
    <location>
        <begin position="781"/>
        <end position="790"/>
    </location>
</feature>
<feature type="compositionally biased region" description="Polar residues" evidence="3">
    <location>
        <begin position="804"/>
        <end position="816"/>
    </location>
</feature>
<feature type="modified residue" description="Phosphoserine" evidence="7">
    <location>
        <position position="223"/>
    </location>
</feature>
<feature type="modified residue" description="Phosphoserine" evidence="1">
    <location>
        <position position="452"/>
    </location>
</feature>
<feature type="splice variant" id="VSP_054560" description="In isoform 4." evidence="4">
    <location>
        <begin position="1"/>
        <end position="573"/>
    </location>
</feature>
<feature type="splice variant" id="VSP_029180" description="In isoform 2." evidence="5">
    <original>DILNNLESCDLEDDDLMLDVDLPEDAPLE</original>
    <variation>VCMDLYTLGIFCLPYYRETCDMIDFVKNL</variation>
    <location>
        <begin position="539"/>
        <end position="567"/>
    </location>
</feature>
<feature type="splice variant" id="VSP_029181" description="In isoform 2." evidence="5">
    <location>
        <begin position="568"/>
        <end position="834"/>
    </location>
</feature>
<feature type="splice variant" id="VSP_040287" description="In isoform 3." evidence="4">
    <original>GGYSAPSFSPWQGSFQGIPRTVPPHRRQTSSTTAFQQPSQTHRSHPGKTNKATTYRGPQ</original>
    <variation>PQVLQPSSSLPRPTDHTQGKLIKPQRIEARSECSIQDMHQGGAHPEESFTHVLHQESNYGLEEQPFSSGPQLTMDVAKSTPSEANLNITVNAQEPYHLANNQISDMQFIPTSLQTPPESSTVDQAKRVGRNQSPPVGYMSQPKSLQLLKPSILSSLVPPPVSESSPSRTPTCKKSPIITTCNSAKLQPTSSQTNLANNQNLKASKLRPPSGSFKQKQTNSPQLEPQSFQAKTSIPRPLTQRKEIMQNPNGNLHSGDCLASNRYSRLPKPKIH</variation>
    <location>
        <begin position="776"/>
        <end position="834"/>
    </location>
</feature>
<feature type="sequence variant" id="VAR_036952" description="In dbSNP:rs3814205.">
    <original>N</original>
    <variation>S</variation>
    <location>
        <position position="84"/>
    </location>
</feature>
<feature type="sequence variant" id="VAR_036953" description="In dbSNP:rs11201058.">
    <original>C</original>
    <variation>Y</variation>
    <location>
        <position position="755"/>
    </location>
</feature>
<feature type="sequence variant" id="VAR_036954" description="In dbSNP:rs11557865.">
    <original>S</original>
    <variation>P</variation>
    <location>
        <position position="819"/>
    </location>
</feature>
<feature type="sequence variant" id="VAR_036955" description="In dbSNP:rs12569751.">
    <original>P</original>
    <variation>S</variation>
    <location>
        <position position="821"/>
    </location>
</feature>
<feature type="sequence conflict" description="In Ref. 5; AAG44473." evidence="6" ref="5">
    <original>G</original>
    <variation>C</variation>
    <location>
        <position position="155"/>
    </location>
</feature>
<feature type="sequence conflict" description="In Ref. 4; BAB14884." evidence="6" ref="4">
    <original>C</original>
    <variation>Y</variation>
    <location>
        <position position="215"/>
    </location>
</feature>
<feature type="sequence conflict" description="In Ref. 4; BAB14884." evidence="6" ref="4">
    <original>E</original>
    <variation>G</variation>
    <location>
        <position position="457"/>
    </location>
</feature>
<feature type="sequence conflict" description="In Ref. 1; BAG61061." evidence="6" ref="1">
    <original>V</original>
    <variation>A</variation>
    <location>
        <position position="524"/>
    </location>
</feature>
<feature type="sequence conflict" description="In Ref. 1; BAG61061." evidence="6" ref="1">
    <original>I</original>
    <variation>V</variation>
    <location>
        <position position="540"/>
    </location>
</feature>
<feature type="sequence conflict" description="In Ref. 1; BAG61061." evidence="6" ref="1">
    <original>H</original>
    <variation>R</variation>
    <location>
        <position position="667"/>
    </location>
</feature>
<feature type="sequence conflict" description="In Ref. 1; BAG61061." evidence="6" ref="1">
    <original>S</original>
    <variation>F</variation>
    <location sequence="Q9H7U1-3">
        <position position="782"/>
    </location>
</feature>
<feature type="sequence conflict" description="In Ref. 1; BAG61061." evidence="6" ref="1">
    <original>M</original>
    <variation>I</variation>
    <location sequence="Q9H7U1-3">
        <position position="881"/>
    </location>
</feature>
<protein>
    <recommendedName>
        <fullName>Serine-rich coiled-coil domain-containing protein 2</fullName>
    </recommendedName>
    <alternativeName>
        <fullName>Coiled-coil serine-rich protein 2</fullName>
    </alternativeName>
    <alternativeName>
        <fullName>Protein GCAP14 homolog</fullName>
    </alternativeName>
</protein>